<dbReference type="EMBL" id="M29838">
    <property type="protein sequence ID" value="AAA27795.1"/>
    <property type="molecule type" value="mRNA"/>
</dbReference>
<dbReference type="PIR" id="A54524">
    <property type="entry name" value="A54524"/>
</dbReference>
<dbReference type="Pfam" id="PF00428">
    <property type="entry name" value="Ribosomal_60s"/>
    <property type="match status" value="1"/>
</dbReference>
<reference key="1">
    <citation type="journal article" date="1987" name="Mol. Biochem. Parasitol.">
        <title>cDNA clone encoding a high molecular weight antigen of Babesia bovis.</title>
        <authorList>
            <person name="Gill A."/>
            <person name="Timms P."/>
            <person name="Kemp D.J."/>
        </authorList>
    </citation>
    <scope>NUCLEOTIDE SEQUENCE [MRNA]</scope>
</reference>
<organism>
    <name type="scientific">Babesia bovis</name>
    <dbReference type="NCBI Taxonomy" id="5865"/>
    <lineage>
        <taxon>Eukaryota</taxon>
        <taxon>Sar</taxon>
        <taxon>Alveolata</taxon>
        <taxon>Apicomplexa</taxon>
        <taxon>Aconoidasida</taxon>
        <taxon>Piroplasmida</taxon>
        <taxon>Babesiidae</taxon>
        <taxon>Babesia</taxon>
    </lineage>
</organism>
<accession>P14201</accession>
<evidence type="ECO:0000256" key="1">
    <source>
        <dbReference type="SAM" id="MobiDB-lite"/>
    </source>
</evidence>
<proteinExistence type="evidence at transcript level"/>
<sequence length="44" mass="4731">DWTTPSCLPPLLPPGAVEAVQEAAPEAAEEPEEEEDDMGFSLFD</sequence>
<feature type="chain" id="PRO_0000064794" description="High molecular weight antigen">
    <location>
        <begin position="1" status="less than"/>
        <end position="44"/>
    </location>
</feature>
<feature type="region of interest" description="Disordered" evidence="1">
    <location>
        <begin position="1"/>
        <end position="44"/>
    </location>
</feature>
<feature type="compositionally biased region" description="Low complexity" evidence="1">
    <location>
        <begin position="14"/>
        <end position="26"/>
    </location>
</feature>
<feature type="compositionally biased region" description="Acidic residues" evidence="1">
    <location>
        <begin position="27"/>
        <end position="38"/>
    </location>
</feature>
<feature type="non-terminal residue">
    <location>
        <position position="1"/>
    </location>
</feature>
<name>BAB4_BABBO</name>
<protein>
    <recommendedName>
        <fullName>High molecular weight antigen</fullName>
    </recommendedName>
</protein>